<proteinExistence type="inferred from homology"/>
<gene>
    <name evidence="1" type="primary">ftsH</name>
</gene>
<sequence>MKLSWKTLLLWSLPIFVIGFFFWQGFLGPTTTDVGSNIASSRMTYGRFLEYLDMGWVKRVDLYENNHTAIVEAVGPELGNRVQRIRVELPASAPELITKLRKANVDLDAHPPKSTSAVWGLLGNLLFPLLLVGGLAFLFRRSNNASGGPGQAMSFGKSKALFQMEAKTGVVFNDVAGVEEAKEEFQEVVTFLKQPESFTAVGAKIPKGVLLVGPPGTGKTLLAKAIAGEASVPFFSISGSEFVEMFVGVGASRVRDLFKKAKDNAPCIVFIDEIDAVGRQRGTGVGGGNDEREQTLNQLLTEMDGFEGNTGVIVIAATNRADILDSALLRPGRFDRQVSVDVPDFKGRLAILEVHAKNKKMEPKVSLETIARRTPGFSGADLANLLNEAAILTARRRKNAMTMSEIDTSIDRVVAGMEGTPLIDSKSKRLIAYHEVGHAIIGSLLEHHDPVQKVTLIPRGQARGLTWFTPSDDQSLISRSQILARIVGALGGRAAEEIIFGDAEVTTGASNDLQQVTSMARQMVTRFGMSKIGPLSLESQGGDPFLGRGMGGGSEYSDEVATNIDKQVREIVSECYAQAKHIIIDNRVVIDRLVDLLIEKETIEGNEFRDIVKEYTAIPEKNYYISQF</sequence>
<geneLocation type="chloroplast"/>
<protein>
    <recommendedName>
        <fullName evidence="1">ATP-dependent zinc metalloprotease FtsH</fullName>
        <ecNumber evidence="1">3.4.24.-</ecNumber>
    </recommendedName>
</protein>
<feature type="chain" id="PRO_0000277305" description="ATP-dependent zinc metalloprotease FtsH">
    <location>
        <begin position="1"/>
        <end position="628"/>
    </location>
</feature>
<feature type="topological domain" description="Stromal" evidence="1">
    <location>
        <begin position="1"/>
        <end position="7"/>
    </location>
</feature>
<feature type="transmembrane region" description="Helical" evidence="1">
    <location>
        <begin position="8"/>
        <end position="28"/>
    </location>
</feature>
<feature type="topological domain" description="Lumenal" evidence="1">
    <location>
        <begin position="29"/>
        <end position="118"/>
    </location>
</feature>
<feature type="transmembrane region" description="Helical" evidence="1">
    <location>
        <begin position="119"/>
        <end position="139"/>
    </location>
</feature>
<feature type="topological domain" description="Stromal" evidence="1">
    <location>
        <begin position="140"/>
        <end position="628"/>
    </location>
</feature>
<feature type="active site" evidence="1">
    <location>
        <position position="435"/>
    </location>
</feature>
<feature type="binding site" evidence="1">
    <location>
        <begin position="213"/>
        <end position="220"/>
    </location>
    <ligand>
        <name>ATP</name>
        <dbReference type="ChEBI" id="CHEBI:30616"/>
    </ligand>
</feature>
<feature type="binding site" evidence="1">
    <location>
        <position position="434"/>
    </location>
    <ligand>
        <name>Zn(2+)</name>
        <dbReference type="ChEBI" id="CHEBI:29105"/>
        <note>catalytic</note>
    </ligand>
</feature>
<feature type="binding site" evidence="1">
    <location>
        <position position="438"/>
    </location>
    <ligand>
        <name>Zn(2+)</name>
        <dbReference type="ChEBI" id="CHEBI:29105"/>
        <note>catalytic</note>
    </ligand>
</feature>
<feature type="binding site" evidence="1">
    <location>
        <position position="512"/>
    </location>
    <ligand>
        <name>Zn(2+)</name>
        <dbReference type="ChEBI" id="CHEBI:29105"/>
        <note>catalytic</note>
    </ligand>
</feature>
<organism>
    <name type="scientific">Pyropia yezoensis</name>
    <name type="common">Susabi-nori</name>
    <name type="synonym">Porphyra yezoensis</name>
    <dbReference type="NCBI Taxonomy" id="2788"/>
    <lineage>
        <taxon>Eukaryota</taxon>
        <taxon>Rhodophyta</taxon>
        <taxon>Bangiophyceae</taxon>
        <taxon>Bangiales</taxon>
        <taxon>Bangiaceae</taxon>
        <taxon>Pyropia</taxon>
    </lineage>
</organism>
<keyword id="KW-0067">ATP-binding</keyword>
<keyword id="KW-0150">Chloroplast</keyword>
<keyword id="KW-0378">Hydrolase</keyword>
<keyword id="KW-0472">Membrane</keyword>
<keyword id="KW-0479">Metal-binding</keyword>
<keyword id="KW-0482">Metalloprotease</keyword>
<keyword id="KW-0547">Nucleotide-binding</keyword>
<keyword id="KW-0934">Plastid</keyword>
<keyword id="KW-0645">Protease</keyword>
<keyword id="KW-0793">Thylakoid</keyword>
<keyword id="KW-0812">Transmembrane</keyword>
<keyword id="KW-1133">Transmembrane helix</keyword>
<keyword id="KW-0862">Zinc</keyword>
<name>FTSH_PYRYE</name>
<accession>Q1XDF9</accession>
<dbReference type="EC" id="3.4.24.-" evidence="1"/>
<dbReference type="EMBL" id="AP006715">
    <property type="protein sequence ID" value="BAE92452.1"/>
    <property type="molecule type" value="Genomic_DNA"/>
</dbReference>
<dbReference type="RefSeq" id="YP_537009.1">
    <property type="nucleotide sequence ID" value="NC_007932.1"/>
</dbReference>
<dbReference type="SMR" id="Q1XDF9"/>
<dbReference type="MEROPS" id="M41.017"/>
<dbReference type="GeneID" id="3978983"/>
<dbReference type="GO" id="GO:0009535">
    <property type="term" value="C:chloroplast thylakoid membrane"/>
    <property type="evidence" value="ECO:0007669"/>
    <property type="project" value="UniProtKB-SubCell"/>
</dbReference>
<dbReference type="GO" id="GO:0005524">
    <property type="term" value="F:ATP binding"/>
    <property type="evidence" value="ECO:0007669"/>
    <property type="project" value="UniProtKB-UniRule"/>
</dbReference>
<dbReference type="GO" id="GO:0016887">
    <property type="term" value="F:ATP hydrolysis activity"/>
    <property type="evidence" value="ECO:0007669"/>
    <property type="project" value="UniProtKB-UniRule"/>
</dbReference>
<dbReference type="GO" id="GO:0004176">
    <property type="term" value="F:ATP-dependent peptidase activity"/>
    <property type="evidence" value="ECO:0007669"/>
    <property type="project" value="InterPro"/>
</dbReference>
<dbReference type="GO" id="GO:0004222">
    <property type="term" value="F:metalloendopeptidase activity"/>
    <property type="evidence" value="ECO:0007669"/>
    <property type="project" value="InterPro"/>
</dbReference>
<dbReference type="GO" id="GO:0008270">
    <property type="term" value="F:zinc ion binding"/>
    <property type="evidence" value="ECO:0007669"/>
    <property type="project" value="UniProtKB-UniRule"/>
</dbReference>
<dbReference type="GO" id="GO:0030163">
    <property type="term" value="P:protein catabolic process"/>
    <property type="evidence" value="ECO:0007669"/>
    <property type="project" value="UniProtKB-UniRule"/>
</dbReference>
<dbReference type="GO" id="GO:0006508">
    <property type="term" value="P:proteolysis"/>
    <property type="evidence" value="ECO:0007669"/>
    <property type="project" value="UniProtKB-KW"/>
</dbReference>
<dbReference type="CDD" id="cd19501">
    <property type="entry name" value="RecA-like_FtsH"/>
    <property type="match status" value="1"/>
</dbReference>
<dbReference type="FunFam" id="1.10.8.60:FF:000001">
    <property type="entry name" value="ATP-dependent zinc metalloprotease FtsH"/>
    <property type="match status" value="1"/>
</dbReference>
<dbReference type="FunFam" id="1.20.58.760:FF:000001">
    <property type="entry name" value="ATP-dependent zinc metalloprotease FtsH"/>
    <property type="match status" value="1"/>
</dbReference>
<dbReference type="FunFam" id="3.40.50.300:FF:000001">
    <property type="entry name" value="ATP-dependent zinc metalloprotease FtsH"/>
    <property type="match status" value="1"/>
</dbReference>
<dbReference type="Gene3D" id="1.10.8.60">
    <property type="match status" value="1"/>
</dbReference>
<dbReference type="Gene3D" id="3.30.720.210">
    <property type="match status" value="1"/>
</dbReference>
<dbReference type="Gene3D" id="3.40.50.300">
    <property type="entry name" value="P-loop containing nucleotide triphosphate hydrolases"/>
    <property type="match status" value="1"/>
</dbReference>
<dbReference type="Gene3D" id="1.20.58.760">
    <property type="entry name" value="Peptidase M41"/>
    <property type="match status" value="1"/>
</dbReference>
<dbReference type="HAMAP" id="MF_01458">
    <property type="entry name" value="FtsH"/>
    <property type="match status" value="1"/>
</dbReference>
<dbReference type="InterPro" id="IPR003593">
    <property type="entry name" value="AAA+_ATPase"/>
</dbReference>
<dbReference type="InterPro" id="IPR041569">
    <property type="entry name" value="AAA_lid_3"/>
</dbReference>
<dbReference type="InterPro" id="IPR003959">
    <property type="entry name" value="ATPase_AAA_core"/>
</dbReference>
<dbReference type="InterPro" id="IPR003960">
    <property type="entry name" value="ATPase_AAA_CS"/>
</dbReference>
<dbReference type="InterPro" id="IPR005936">
    <property type="entry name" value="FtsH"/>
</dbReference>
<dbReference type="InterPro" id="IPR027417">
    <property type="entry name" value="P-loop_NTPase"/>
</dbReference>
<dbReference type="InterPro" id="IPR011546">
    <property type="entry name" value="Pept_M41_FtsH_extracell"/>
</dbReference>
<dbReference type="InterPro" id="IPR000642">
    <property type="entry name" value="Peptidase_M41"/>
</dbReference>
<dbReference type="InterPro" id="IPR037219">
    <property type="entry name" value="Peptidase_M41-like"/>
</dbReference>
<dbReference type="NCBIfam" id="TIGR01241">
    <property type="entry name" value="FtsH_fam"/>
    <property type="match status" value="1"/>
</dbReference>
<dbReference type="PANTHER" id="PTHR23076:SF139">
    <property type="entry name" value="ATP-DEPENDENT ZINC METALLOPROTEASE FTSH 2, CHLOROPLASTIC"/>
    <property type="match status" value="1"/>
</dbReference>
<dbReference type="PANTHER" id="PTHR23076">
    <property type="entry name" value="METALLOPROTEASE M41 FTSH"/>
    <property type="match status" value="1"/>
</dbReference>
<dbReference type="Pfam" id="PF00004">
    <property type="entry name" value="AAA"/>
    <property type="match status" value="1"/>
</dbReference>
<dbReference type="Pfam" id="PF17862">
    <property type="entry name" value="AAA_lid_3"/>
    <property type="match status" value="1"/>
</dbReference>
<dbReference type="Pfam" id="PF06480">
    <property type="entry name" value="FtsH_ext"/>
    <property type="match status" value="1"/>
</dbReference>
<dbReference type="Pfam" id="PF01434">
    <property type="entry name" value="Peptidase_M41"/>
    <property type="match status" value="1"/>
</dbReference>
<dbReference type="SMART" id="SM00382">
    <property type="entry name" value="AAA"/>
    <property type="match status" value="1"/>
</dbReference>
<dbReference type="SUPFAM" id="SSF140990">
    <property type="entry name" value="FtsH protease domain-like"/>
    <property type="match status" value="1"/>
</dbReference>
<dbReference type="SUPFAM" id="SSF52540">
    <property type="entry name" value="P-loop containing nucleoside triphosphate hydrolases"/>
    <property type="match status" value="1"/>
</dbReference>
<dbReference type="PROSITE" id="PS00674">
    <property type="entry name" value="AAA"/>
    <property type="match status" value="1"/>
</dbReference>
<reference key="1">
    <citation type="submission" date="2003-11" db="EMBL/GenBank/DDBJ databases">
        <title>Whole genome sequence of Porphyra yezoensis chloroplast.</title>
        <authorList>
            <person name="Kunimoto M."/>
            <person name="Morishima K."/>
            <person name="Yoshikawa M."/>
            <person name="Fukuda S."/>
            <person name="Kobayashi T."/>
            <person name="Kobayashi M."/>
            <person name="Okazaki T."/>
            <person name="Ohara I."/>
            <person name="Nakayama I."/>
        </authorList>
    </citation>
    <scope>NUCLEOTIDE SEQUENCE [LARGE SCALE GENOMIC DNA]</scope>
    <source>
        <strain>U-51</strain>
    </source>
</reference>
<comment type="function">
    <text evidence="1">Acts as a processive, ATP-dependent zinc metallopeptidase.</text>
</comment>
<comment type="cofactor">
    <cofactor evidence="1">
        <name>Zn(2+)</name>
        <dbReference type="ChEBI" id="CHEBI:29105"/>
    </cofactor>
    <text evidence="1">Binds 1 zinc ion per subunit.</text>
</comment>
<comment type="subunit">
    <text evidence="1">Homohexamer.</text>
</comment>
<comment type="subcellular location">
    <subcellularLocation>
        <location evidence="1">Plastid</location>
        <location evidence="1">Chloroplast thylakoid membrane</location>
        <topology evidence="1">Multi-pass membrane protein</topology>
        <orientation evidence="1">Stromal side</orientation>
    </subcellularLocation>
</comment>
<comment type="similarity">
    <text evidence="1">In the central section; belongs to the AAA ATPase family.</text>
</comment>
<comment type="similarity">
    <text evidence="1">In the C-terminal section; belongs to the peptidase M41 family.</text>
</comment>
<evidence type="ECO:0000255" key="1">
    <source>
        <dbReference type="HAMAP-Rule" id="MF_01458"/>
    </source>
</evidence>